<evidence type="ECO:0000255" key="1">
    <source>
        <dbReference type="HAMAP-Rule" id="MF_00247"/>
    </source>
</evidence>
<gene>
    <name evidence="1" type="primary">sthA</name>
    <name type="ordered locus">PputGB1_1692</name>
</gene>
<accession>B0KH90</accession>
<keyword id="KW-0963">Cytoplasm</keyword>
<keyword id="KW-0274">FAD</keyword>
<keyword id="KW-0285">Flavoprotein</keyword>
<keyword id="KW-0520">NAD</keyword>
<keyword id="KW-0521">NADP</keyword>
<keyword id="KW-0560">Oxidoreductase</keyword>
<name>STHA_PSEPG</name>
<reference key="1">
    <citation type="submission" date="2008-01" db="EMBL/GenBank/DDBJ databases">
        <title>Complete sequence of Pseudomonas putida GB-1.</title>
        <authorList>
            <consortium name="US DOE Joint Genome Institute"/>
            <person name="Copeland A."/>
            <person name="Lucas S."/>
            <person name="Lapidus A."/>
            <person name="Barry K."/>
            <person name="Glavina del Rio T."/>
            <person name="Dalin E."/>
            <person name="Tice H."/>
            <person name="Pitluck S."/>
            <person name="Bruce D."/>
            <person name="Goodwin L."/>
            <person name="Chertkov O."/>
            <person name="Brettin T."/>
            <person name="Detter J.C."/>
            <person name="Han C."/>
            <person name="Kuske C.R."/>
            <person name="Schmutz J."/>
            <person name="Larimer F."/>
            <person name="Land M."/>
            <person name="Hauser L."/>
            <person name="Kyrpides N."/>
            <person name="Kim E."/>
            <person name="McCarthy J.K."/>
            <person name="Richardson P."/>
        </authorList>
    </citation>
    <scope>NUCLEOTIDE SEQUENCE [LARGE SCALE GENOMIC DNA]</scope>
    <source>
        <strain>GB-1</strain>
    </source>
</reference>
<protein>
    <recommendedName>
        <fullName evidence="1">Soluble pyridine nucleotide transhydrogenase</fullName>
        <shortName evidence="1">STH</shortName>
        <ecNumber evidence="1">1.6.1.1</ecNumber>
    </recommendedName>
    <alternativeName>
        <fullName evidence="1">NAD(P)(+) transhydrogenase [B-specific]</fullName>
    </alternativeName>
</protein>
<organism>
    <name type="scientific">Pseudomonas putida (strain GB-1)</name>
    <dbReference type="NCBI Taxonomy" id="76869"/>
    <lineage>
        <taxon>Bacteria</taxon>
        <taxon>Pseudomonadati</taxon>
        <taxon>Pseudomonadota</taxon>
        <taxon>Gammaproteobacteria</taxon>
        <taxon>Pseudomonadales</taxon>
        <taxon>Pseudomonadaceae</taxon>
        <taxon>Pseudomonas</taxon>
    </lineage>
</organism>
<feature type="chain" id="PRO_1000078412" description="Soluble pyridine nucleotide transhydrogenase">
    <location>
        <begin position="1"/>
        <end position="464"/>
    </location>
</feature>
<feature type="binding site" evidence="1">
    <location>
        <begin position="35"/>
        <end position="44"/>
    </location>
    <ligand>
        <name>FAD</name>
        <dbReference type="ChEBI" id="CHEBI:57692"/>
    </ligand>
</feature>
<dbReference type="EC" id="1.6.1.1" evidence="1"/>
<dbReference type="EMBL" id="CP000926">
    <property type="protein sequence ID" value="ABY97595.1"/>
    <property type="molecule type" value="Genomic_DNA"/>
</dbReference>
<dbReference type="RefSeq" id="WP_012271357.1">
    <property type="nucleotide sequence ID" value="NC_010322.1"/>
</dbReference>
<dbReference type="SMR" id="B0KH90"/>
<dbReference type="KEGG" id="ppg:PputGB1_1692"/>
<dbReference type="eggNOG" id="COG1249">
    <property type="taxonomic scope" value="Bacteria"/>
</dbReference>
<dbReference type="HOGENOM" id="CLU_016755_0_0_6"/>
<dbReference type="Proteomes" id="UP000002157">
    <property type="component" value="Chromosome"/>
</dbReference>
<dbReference type="GO" id="GO:0005829">
    <property type="term" value="C:cytosol"/>
    <property type="evidence" value="ECO:0007669"/>
    <property type="project" value="TreeGrafter"/>
</dbReference>
<dbReference type="GO" id="GO:0004148">
    <property type="term" value="F:dihydrolipoyl dehydrogenase (NADH) activity"/>
    <property type="evidence" value="ECO:0007669"/>
    <property type="project" value="TreeGrafter"/>
</dbReference>
<dbReference type="GO" id="GO:0050660">
    <property type="term" value="F:flavin adenine dinucleotide binding"/>
    <property type="evidence" value="ECO:0007669"/>
    <property type="project" value="TreeGrafter"/>
</dbReference>
<dbReference type="GO" id="GO:0003957">
    <property type="term" value="F:NAD(P)+ transhydrogenase (Si-specific) activity"/>
    <property type="evidence" value="ECO:0007669"/>
    <property type="project" value="UniProtKB-UniRule"/>
</dbReference>
<dbReference type="GO" id="GO:0006103">
    <property type="term" value="P:2-oxoglutarate metabolic process"/>
    <property type="evidence" value="ECO:0007669"/>
    <property type="project" value="TreeGrafter"/>
</dbReference>
<dbReference type="GO" id="GO:0006739">
    <property type="term" value="P:NADP metabolic process"/>
    <property type="evidence" value="ECO:0007669"/>
    <property type="project" value="UniProtKB-UniRule"/>
</dbReference>
<dbReference type="FunFam" id="3.30.390.30:FF:000002">
    <property type="entry name" value="Soluble pyridine nucleotide transhydrogenase"/>
    <property type="match status" value="1"/>
</dbReference>
<dbReference type="FunFam" id="3.50.50.60:FF:000008">
    <property type="entry name" value="Soluble pyridine nucleotide transhydrogenase"/>
    <property type="match status" value="1"/>
</dbReference>
<dbReference type="Gene3D" id="3.30.390.30">
    <property type="match status" value="1"/>
</dbReference>
<dbReference type="Gene3D" id="3.50.50.60">
    <property type="entry name" value="FAD/NAD(P)-binding domain"/>
    <property type="match status" value="2"/>
</dbReference>
<dbReference type="HAMAP" id="MF_00247">
    <property type="entry name" value="SthA"/>
    <property type="match status" value="1"/>
</dbReference>
<dbReference type="InterPro" id="IPR050151">
    <property type="entry name" value="Class-I_Pyr_Nuc-Dis_Oxidored"/>
</dbReference>
<dbReference type="InterPro" id="IPR036188">
    <property type="entry name" value="FAD/NAD-bd_sf"/>
</dbReference>
<dbReference type="InterPro" id="IPR023753">
    <property type="entry name" value="FAD/NAD-binding_dom"/>
</dbReference>
<dbReference type="InterPro" id="IPR016156">
    <property type="entry name" value="FAD/NAD-linked_Rdtase_dimer_sf"/>
</dbReference>
<dbReference type="InterPro" id="IPR001100">
    <property type="entry name" value="Pyr_nuc-diS_OxRdtase"/>
</dbReference>
<dbReference type="InterPro" id="IPR004099">
    <property type="entry name" value="Pyr_nucl-diS_OxRdtase_dimer"/>
</dbReference>
<dbReference type="InterPro" id="IPR022962">
    <property type="entry name" value="STH_gammaproteobact"/>
</dbReference>
<dbReference type="NCBIfam" id="NF003585">
    <property type="entry name" value="PRK05249.1"/>
    <property type="match status" value="1"/>
</dbReference>
<dbReference type="PANTHER" id="PTHR22912">
    <property type="entry name" value="DISULFIDE OXIDOREDUCTASE"/>
    <property type="match status" value="1"/>
</dbReference>
<dbReference type="PANTHER" id="PTHR22912:SF93">
    <property type="entry name" value="SOLUBLE PYRIDINE NUCLEOTIDE TRANSHYDROGENASE"/>
    <property type="match status" value="1"/>
</dbReference>
<dbReference type="Pfam" id="PF07992">
    <property type="entry name" value="Pyr_redox_2"/>
    <property type="match status" value="1"/>
</dbReference>
<dbReference type="Pfam" id="PF02852">
    <property type="entry name" value="Pyr_redox_dim"/>
    <property type="match status" value="1"/>
</dbReference>
<dbReference type="PIRSF" id="PIRSF000350">
    <property type="entry name" value="Mercury_reductase_MerA"/>
    <property type="match status" value="1"/>
</dbReference>
<dbReference type="PRINTS" id="PR00368">
    <property type="entry name" value="FADPNR"/>
</dbReference>
<dbReference type="PRINTS" id="PR00411">
    <property type="entry name" value="PNDRDTASEI"/>
</dbReference>
<dbReference type="SUPFAM" id="SSF51905">
    <property type="entry name" value="FAD/NAD(P)-binding domain"/>
    <property type="match status" value="1"/>
</dbReference>
<dbReference type="SUPFAM" id="SSF55424">
    <property type="entry name" value="FAD/NAD-linked reductases, dimerisation (C-terminal) domain"/>
    <property type="match status" value="1"/>
</dbReference>
<sequence>MAVYNYDVVVLGSGPAGEGAAMNAAKAGRKVAMVDDRRQVGGNCTHLGTIPSKALRHSVRQIMQFNTNPMFRAIGEPRWFSFPDVLKSAEKVISKQVASRTGYYARNRVDVFFGTGSFADEQTVEVVCPNGVVEKLNAKHIIIATGSRPYRPADIDFHHPRVYDSDTILSLSHTPRKLIVYGAGVIGCEYASIFSGLGVLVELVDNRGQLLSFLDSEISQALSYHFSNNNITVRHNEEYERVEGLDNGVILHLKSGKKIKADALLWCNGRTGNTDKLGLENIGIKVNSRGQIEVDEAYRTTVPNIYGAGDVIGWPSLASAAHDQGRSAAGSIVDNGSWRFVNDVPTGIYTIPEISSIGKNEQELTQAKVPYEVGKAFFKGMARAQIAGEPQGMLKILFHRETLEILGVHCFGYQASEIVHIGQAIMNQPGEHNNLKYFVNTTFNYPTMAEAYRVAAYDGLNRLF</sequence>
<comment type="function">
    <text evidence="1">Conversion of NADPH, generated by peripheral catabolic pathways, to NADH, which can enter the respiratory chain for energy generation.</text>
</comment>
<comment type="catalytic activity">
    <reaction evidence="1">
        <text>NAD(+) + NADPH = NADH + NADP(+)</text>
        <dbReference type="Rhea" id="RHEA:11692"/>
        <dbReference type="ChEBI" id="CHEBI:57540"/>
        <dbReference type="ChEBI" id="CHEBI:57783"/>
        <dbReference type="ChEBI" id="CHEBI:57945"/>
        <dbReference type="ChEBI" id="CHEBI:58349"/>
        <dbReference type="EC" id="1.6.1.1"/>
    </reaction>
</comment>
<comment type="cofactor">
    <cofactor evidence="1">
        <name>FAD</name>
        <dbReference type="ChEBI" id="CHEBI:57692"/>
    </cofactor>
    <text evidence="1">Binds 1 FAD per subunit.</text>
</comment>
<comment type="subcellular location">
    <subcellularLocation>
        <location evidence="1">Cytoplasm</location>
    </subcellularLocation>
</comment>
<comment type="similarity">
    <text evidence="1">Belongs to the class-I pyridine nucleotide-disulfide oxidoreductase family.</text>
</comment>
<proteinExistence type="inferred from homology"/>